<evidence type="ECO:0000255" key="1">
    <source>
        <dbReference type="HAMAP-Rule" id="MF_01418"/>
    </source>
</evidence>
<sequence>MCTLGHKPDNSLVSNAFGFLRLPLDFMPYDGDADWVITGVPFDMATSGRAGGRHGPAAIRQVSTNLAWEGKRWPWNFDMRDRLKVVDCGDVVFSFGDAQEMSDNLQAHAERLLASGKRCLTFGGDHFITLPLLRAHAKHFGKMALVHFDAHTDTYAHGSKFDHGTMFFHAPNEGLIDPQHSVQIGIRTEYDHDNGFTVLDAAQVNDRSVEDVLAEVKRIVGDLPVYLTFDIDCLDPAHAPGTGTPVIGGLTSDRALKLVRGLQDLDIVGMDVVEVAPAYDQSEITALAAATLALEMLYIQAAKK</sequence>
<proteinExistence type="inferred from homology"/>
<comment type="function">
    <text evidence="1">Catalyzes the formation of putrescine from agmatine.</text>
</comment>
<comment type="catalytic activity">
    <reaction evidence="1">
        <text>agmatine + H2O = urea + putrescine</text>
        <dbReference type="Rhea" id="RHEA:13929"/>
        <dbReference type="ChEBI" id="CHEBI:15377"/>
        <dbReference type="ChEBI" id="CHEBI:16199"/>
        <dbReference type="ChEBI" id="CHEBI:58145"/>
        <dbReference type="ChEBI" id="CHEBI:326268"/>
        <dbReference type="EC" id="3.5.3.11"/>
    </reaction>
</comment>
<comment type="cofactor">
    <cofactor evidence="1">
        <name>Mn(2+)</name>
        <dbReference type="ChEBI" id="CHEBI:29035"/>
    </cofactor>
</comment>
<comment type="pathway">
    <text evidence="1">Amine and polyamine biosynthesis; putrescine biosynthesis via agmatine pathway; putrescine from agmatine: step 1/1.</text>
</comment>
<comment type="similarity">
    <text evidence="1">Belongs to the arginase family. Agmatinase subfamily.</text>
</comment>
<protein>
    <recommendedName>
        <fullName evidence="1">Agmatinase</fullName>
        <ecNumber evidence="1">3.5.3.11</ecNumber>
    </recommendedName>
    <alternativeName>
        <fullName evidence="1">Agmatine ureohydrolase</fullName>
        <shortName evidence="1">AUH</shortName>
    </alternativeName>
</protein>
<accession>C5BAV1</accession>
<dbReference type="EC" id="3.5.3.11" evidence="1"/>
<dbReference type="EMBL" id="CP001600">
    <property type="protein sequence ID" value="ACR70510.1"/>
    <property type="molecule type" value="Genomic_DNA"/>
</dbReference>
<dbReference type="RefSeq" id="WP_015872583.1">
    <property type="nucleotide sequence ID" value="NZ_CP169062.1"/>
</dbReference>
<dbReference type="SMR" id="C5BAV1"/>
<dbReference type="STRING" id="67780.B6E78_08550"/>
<dbReference type="GeneID" id="69540227"/>
<dbReference type="KEGG" id="eic:NT01EI_3373"/>
<dbReference type="PATRIC" id="fig|634503.3.peg.2999"/>
<dbReference type="HOGENOM" id="CLU_039478_0_0_6"/>
<dbReference type="OrthoDB" id="9789727at2"/>
<dbReference type="UniPathway" id="UPA00534">
    <property type="reaction ID" value="UER00287"/>
</dbReference>
<dbReference type="Proteomes" id="UP000001485">
    <property type="component" value="Chromosome"/>
</dbReference>
<dbReference type="GO" id="GO:0008783">
    <property type="term" value="F:agmatinase activity"/>
    <property type="evidence" value="ECO:0007669"/>
    <property type="project" value="UniProtKB-UniRule"/>
</dbReference>
<dbReference type="GO" id="GO:0030145">
    <property type="term" value="F:manganese ion binding"/>
    <property type="evidence" value="ECO:0007669"/>
    <property type="project" value="InterPro"/>
</dbReference>
<dbReference type="GO" id="GO:0033389">
    <property type="term" value="P:putrescine biosynthetic process from arginine, via agmatine"/>
    <property type="evidence" value="ECO:0007669"/>
    <property type="project" value="TreeGrafter"/>
</dbReference>
<dbReference type="GO" id="GO:0008295">
    <property type="term" value="P:spermidine biosynthetic process"/>
    <property type="evidence" value="ECO:0007669"/>
    <property type="project" value="UniProtKB-UniRule"/>
</dbReference>
<dbReference type="CDD" id="cd11592">
    <property type="entry name" value="Agmatinase_PAH"/>
    <property type="match status" value="1"/>
</dbReference>
<dbReference type="FunFam" id="3.40.800.10:FF:000001">
    <property type="entry name" value="Agmatinase"/>
    <property type="match status" value="1"/>
</dbReference>
<dbReference type="Gene3D" id="3.40.800.10">
    <property type="entry name" value="Ureohydrolase domain"/>
    <property type="match status" value="1"/>
</dbReference>
<dbReference type="HAMAP" id="MF_01418">
    <property type="entry name" value="SpeB"/>
    <property type="match status" value="1"/>
</dbReference>
<dbReference type="InterPro" id="IPR023694">
    <property type="entry name" value="Agmatinase"/>
</dbReference>
<dbReference type="InterPro" id="IPR005925">
    <property type="entry name" value="Agmatinase-rel"/>
</dbReference>
<dbReference type="InterPro" id="IPR006035">
    <property type="entry name" value="Ureohydrolase"/>
</dbReference>
<dbReference type="InterPro" id="IPR023696">
    <property type="entry name" value="Ureohydrolase_dom_sf"/>
</dbReference>
<dbReference type="InterPro" id="IPR020855">
    <property type="entry name" value="Ureohydrolase_Mn_BS"/>
</dbReference>
<dbReference type="NCBIfam" id="TIGR01230">
    <property type="entry name" value="agmatinase"/>
    <property type="match status" value="1"/>
</dbReference>
<dbReference type="NCBIfam" id="NF002564">
    <property type="entry name" value="PRK02190.1"/>
    <property type="match status" value="1"/>
</dbReference>
<dbReference type="PANTHER" id="PTHR11358">
    <property type="entry name" value="ARGINASE/AGMATINASE"/>
    <property type="match status" value="1"/>
</dbReference>
<dbReference type="PANTHER" id="PTHR11358:SF26">
    <property type="entry name" value="GUANIDINO ACID HYDROLASE, MITOCHONDRIAL"/>
    <property type="match status" value="1"/>
</dbReference>
<dbReference type="Pfam" id="PF00491">
    <property type="entry name" value="Arginase"/>
    <property type="match status" value="1"/>
</dbReference>
<dbReference type="PIRSF" id="PIRSF036979">
    <property type="entry name" value="Arginase"/>
    <property type="match status" value="1"/>
</dbReference>
<dbReference type="SUPFAM" id="SSF52768">
    <property type="entry name" value="Arginase/deacetylase"/>
    <property type="match status" value="1"/>
</dbReference>
<dbReference type="PROSITE" id="PS01053">
    <property type="entry name" value="ARGINASE_1"/>
    <property type="match status" value="1"/>
</dbReference>
<dbReference type="PROSITE" id="PS51409">
    <property type="entry name" value="ARGINASE_2"/>
    <property type="match status" value="1"/>
</dbReference>
<keyword id="KW-0378">Hydrolase</keyword>
<keyword id="KW-0464">Manganese</keyword>
<keyword id="KW-0479">Metal-binding</keyword>
<keyword id="KW-0620">Polyamine biosynthesis</keyword>
<keyword id="KW-0661">Putrescine biosynthesis</keyword>
<keyword id="KW-0745">Spermidine biosynthesis</keyword>
<name>SPEB_EDWI9</name>
<organism>
    <name type="scientific">Edwardsiella ictaluri (strain 93-146)</name>
    <dbReference type="NCBI Taxonomy" id="634503"/>
    <lineage>
        <taxon>Bacteria</taxon>
        <taxon>Pseudomonadati</taxon>
        <taxon>Pseudomonadota</taxon>
        <taxon>Gammaproteobacteria</taxon>
        <taxon>Enterobacterales</taxon>
        <taxon>Hafniaceae</taxon>
        <taxon>Edwardsiella</taxon>
    </lineage>
</organism>
<reference key="1">
    <citation type="submission" date="2009-03" db="EMBL/GenBank/DDBJ databases">
        <title>Complete genome sequence of Edwardsiella ictaluri 93-146.</title>
        <authorList>
            <person name="Williams M.L."/>
            <person name="Gillaspy A.F."/>
            <person name="Dyer D.W."/>
            <person name="Thune R.L."/>
            <person name="Waldbieser G.C."/>
            <person name="Schuster S.C."/>
            <person name="Gipson J."/>
            <person name="Zaitshik J."/>
            <person name="Landry C."/>
            <person name="Lawrence M.L."/>
        </authorList>
    </citation>
    <scope>NUCLEOTIDE SEQUENCE [LARGE SCALE GENOMIC DNA]</scope>
    <source>
        <strain>93-146</strain>
    </source>
</reference>
<feature type="chain" id="PRO_1000215251" description="Agmatinase">
    <location>
        <begin position="1"/>
        <end position="304"/>
    </location>
</feature>
<feature type="binding site" evidence="1">
    <location>
        <position position="126"/>
    </location>
    <ligand>
        <name>Mn(2+)</name>
        <dbReference type="ChEBI" id="CHEBI:29035"/>
    </ligand>
</feature>
<feature type="binding site" evidence="1">
    <location>
        <position position="149"/>
    </location>
    <ligand>
        <name>Mn(2+)</name>
        <dbReference type="ChEBI" id="CHEBI:29035"/>
    </ligand>
</feature>
<feature type="binding site" evidence="1">
    <location>
        <position position="151"/>
    </location>
    <ligand>
        <name>Mn(2+)</name>
        <dbReference type="ChEBI" id="CHEBI:29035"/>
    </ligand>
</feature>
<feature type="binding site" evidence="1">
    <location>
        <position position="153"/>
    </location>
    <ligand>
        <name>Mn(2+)</name>
        <dbReference type="ChEBI" id="CHEBI:29035"/>
    </ligand>
</feature>
<feature type="binding site" evidence="1">
    <location>
        <position position="230"/>
    </location>
    <ligand>
        <name>Mn(2+)</name>
        <dbReference type="ChEBI" id="CHEBI:29035"/>
    </ligand>
</feature>
<feature type="binding site" evidence="1">
    <location>
        <position position="232"/>
    </location>
    <ligand>
        <name>Mn(2+)</name>
        <dbReference type="ChEBI" id="CHEBI:29035"/>
    </ligand>
</feature>
<gene>
    <name evidence="1" type="primary">speB</name>
    <name type="ordered locus">NT01EI_3373</name>
</gene>